<feature type="chain" id="PRO_1000185655" description="Serine/threonine transporter SstT">
    <location>
        <begin position="1"/>
        <end position="414"/>
    </location>
</feature>
<feature type="transmembrane region" description="Helical" evidence="1">
    <location>
        <begin position="16"/>
        <end position="36"/>
    </location>
</feature>
<feature type="transmembrane region" description="Helical" evidence="1">
    <location>
        <begin position="46"/>
        <end position="66"/>
    </location>
</feature>
<feature type="transmembrane region" description="Helical" evidence="1">
    <location>
        <begin position="84"/>
        <end position="104"/>
    </location>
</feature>
<feature type="transmembrane region" description="Helical" evidence="1">
    <location>
        <begin position="143"/>
        <end position="163"/>
    </location>
</feature>
<feature type="transmembrane region" description="Helical" evidence="1">
    <location>
        <begin position="180"/>
        <end position="200"/>
    </location>
</feature>
<feature type="transmembrane region" description="Helical" evidence="1">
    <location>
        <begin position="219"/>
        <end position="239"/>
    </location>
</feature>
<feature type="transmembrane region" description="Helical" evidence="1">
    <location>
        <begin position="300"/>
        <end position="320"/>
    </location>
</feature>
<feature type="transmembrane region" description="Helical" evidence="1">
    <location>
        <begin position="332"/>
        <end position="352"/>
    </location>
</feature>
<keyword id="KW-0029">Amino-acid transport</keyword>
<keyword id="KW-0997">Cell inner membrane</keyword>
<keyword id="KW-1003">Cell membrane</keyword>
<keyword id="KW-0472">Membrane</keyword>
<keyword id="KW-0769">Symport</keyword>
<keyword id="KW-0812">Transmembrane</keyword>
<keyword id="KW-1133">Transmembrane helix</keyword>
<keyword id="KW-0813">Transport</keyword>
<protein>
    <recommendedName>
        <fullName evidence="1">Serine/threonine transporter SstT</fullName>
    </recommendedName>
    <alternativeName>
        <fullName evidence="1">Na(+)/serine-threonine symporter</fullName>
    </alternativeName>
</protein>
<comment type="function">
    <text evidence="1">Involved in the import of serine and threonine into the cell, with the concomitant import of sodium (symport system).</text>
</comment>
<comment type="catalytic activity">
    <reaction evidence="1">
        <text>L-serine(in) + Na(+)(in) = L-serine(out) + Na(+)(out)</text>
        <dbReference type="Rhea" id="RHEA:29575"/>
        <dbReference type="ChEBI" id="CHEBI:29101"/>
        <dbReference type="ChEBI" id="CHEBI:33384"/>
    </reaction>
    <physiologicalReaction direction="right-to-left" evidence="1">
        <dbReference type="Rhea" id="RHEA:29577"/>
    </physiologicalReaction>
</comment>
<comment type="catalytic activity">
    <reaction evidence="1">
        <text>L-threonine(in) + Na(+)(in) = L-threonine(out) + Na(+)(out)</text>
        <dbReference type="Rhea" id="RHEA:69999"/>
        <dbReference type="ChEBI" id="CHEBI:29101"/>
        <dbReference type="ChEBI" id="CHEBI:57926"/>
    </reaction>
    <physiologicalReaction direction="right-to-left" evidence="1">
        <dbReference type="Rhea" id="RHEA:70001"/>
    </physiologicalReaction>
</comment>
<comment type="subcellular location">
    <subcellularLocation>
        <location evidence="1">Cell inner membrane</location>
        <topology evidence="1">Multi-pass membrane protein</topology>
    </subcellularLocation>
</comment>
<comment type="similarity">
    <text evidence="1">Belongs to the dicarboxylate/amino acid:cation symporter (DAACS) (TC 2.A.23) family.</text>
</comment>
<proteinExistence type="inferred from homology"/>
<name>SSTT_SALPC</name>
<evidence type="ECO:0000255" key="1">
    <source>
        <dbReference type="HAMAP-Rule" id="MF_01582"/>
    </source>
</evidence>
<sequence length="414" mass="43413">MATQRASGLLQRLAQGSLVKQILVGLVLGILLAWISKPAAEAVGLLGTLFVGALKAVAPVLVLMLVMASIANHQHGQKTNIRPILFLYLLGTFSAALAAVVFSFAFPSTLHLSSSAQDIVPPSGIVEVLRGLLMSMVSNPIDALLNANYIGILVWAVGLGFALRHGNETTKNLVNDMSNAVTFMVKLVIRFAPVGIFGLVSSTLATTGFSTLWGYAHLLVVLIGCMLLVALVVNPLLVFWKIRRNPYPLVFACLRESGVYAFFTRSSAANIPVNMALCEKLNLDRDTYSVSIPLGATINMAGAAITITVLTLAAVHTLGVPVDLPTALLLSVVASLCACGASGVAGGSLLLIPLACNMFGIPNDIAMQVVAVGFIIGVLQDSCETALNSSTDVLFTAAACQAEDERLANNALRS</sequence>
<gene>
    <name evidence="1" type="primary">sstT</name>
    <name type="ordered locus">SPC_3301</name>
</gene>
<accession>C0PYZ8</accession>
<organism>
    <name type="scientific">Salmonella paratyphi C (strain RKS4594)</name>
    <dbReference type="NCBI Taxonomy" id="476213"/>
    <lineage>
        <taxon>Bacteria</taxon>
        <taxon>Pseudomonadati</taxon>
        <taxon>Pseudomonadota</taxon>
        <taxon>Gammaproteobacteria</taxon>
        <taxon>Enterobacterales</taxon>
        <taxon>Enterobacteriaceae</taxon>
        <taxon>Salmonella</taxon>
    </lineage>
</organism>
<reference key="1">
    <citation type="journal article" date="2009" name="PLoS ONE">
        <title>Salmonella paratyphi C: genetic divergence from Salmonella choleraesuis and pathogenic convergence with Salmonella typhi.</title>
        <authorList>
            <person name="Liu W.-Q."/>
            <person name="Feng Y."/>
            <person name="Wang Y."/>
            <person name="Zou Q.-H."/>
            <person name="Chen F."/>
            <person name="Guo J.-T."/>
            <person name="Peng Y.-H."/>
            <person name="Jin Y."/>
            <person name="Li Y.-G."/>
            <person name="Hu S.-N."/>
            <person name="Johnston R.N."/>
            <person name="Liu G.-R."/>
            <person name="Liu S.-L."/>
        </authorList>
    </citation>
    <scope>NUCLEOTIDE SEQUENCE [LARGE SCALE GENOMIC DNA]</scope>
    <source>
        <strain>RKS4594</strain>
    </source>
</reference>
<dbReference type="EMBL" id="CP000857">
    <property type="protein sequence ID" value="ACN47386.1"/>
    <property type="molecule type" value="Genomic_DNA"/>
</dbReference>
<dbReference type="RefSeq" id="WP_000235363.1">
    <property type="nucleotide sequence ID" value="NC_012125.1"/>
</dbReference>
<dbReference type="SMR" id="C0PYZ8"/>
<dbReference type="KEGG" id="sei:SPC_3301"/>
<dbReference type="HOGENOM" id="CLU_044581_0_0_6"/>
<dbReference type="Proteomes" id="UP000001599">
    <property type="component" value="Chromosome"/>
</dbReference>
<dbReference type="GO" id="GO:0005886">
    <property type="term" value="C:plasma membrane"/>
    <property type="evidence" value="ECO:0007669"/>
    <property type="project" value="UniProtKB-SubCell"/>
</dbReference>
<dbReference type="GO" id="GO:0005295">
    <property type="term" value="F:neutral L-amino acid:sodium symporter activity"/>
    <property type="evidence" value="ECO:0007669"/>
    <property type="project" value="TreeGrafter"/>
</dbReference>
<dbReference type="GO" id="GO:0032329">
    <property type="term" value="P:serine transport"/>
    <property type="evidence" value="ECO:0007669"/>
    <property type="project" value="InterPro"/>
</dbReference>
<dbReference type="GO" id="GO:0015826">
    <property type="term" value="P:threonine transport"/>
    <property type="evidence" value="ECO:0007669"/>
    <property type="project" value="InterPro"/>
</dbReference>
<dbReference type="FunFam" id="1.10.3860.10:FF:000003">
    <property type="entry name" value="Serine/threonine transporter sstT"/>
    <property type="match status" value="1"/>
</dbReference>
<dbReference type="Gene3D" id="1.10.3860.10">
    <property type="entry name" value="Sodium:dicarboxylate symporter"/>
    <property type="match status" value="1"/>
</dbReference>
<dbReference type="HAMAP" id="MF_01582">
    <property type="entry name" value="Ser_Thr_transp_SstT"/>
    <property type="match status" value="1"/>
</dbReference>
<dbReference type="InterPro" id="IPR001991">
    <property type="entry name" value="Na-dicarboxylate_symporter"/>
</dbReference>
<dbReference type="InterPro" id="IPR036458">
    <property type="entry name" value="Na:dicarbo_symporter_sf"/>
</dbReference>
<dbReference type="InterPro" id="IPR023025">
    <property type="entry name" value="Ser_Thr_transp_SstT"/>
</dbReference>
<dbReference type="NCBIfam" id="NF010151">
    <property type="entry name" value="PRK13628.1"/>
    <property type="match status" value="1"/>
</dbReference>
<dbReference type="PANTHER" id="PTHR42865">
    <property type="entry name" value="PROTON/GLUTAMATE-ASPARTATE SYMPORTER"/>
    <property type="match status" value="1"/>
</dbReference>
<dbReference type="PANTHER" id="PTHR42865:SF8">
    <property type="entry name" value="SERINE_THREONINE TRANSPORTER SSTT"/>
    <property type="match status" value="1"/>
</dbReference>
<dbReference type="Pfam" id="PF00375">
    <property type="entry name" value="SDF"/>
    <property type="match status" value="1"/>
</dbReference>
<dbReference type="PRINTS" id="PR00173">
    <property type="entry name" value="EDTRNSPORT"/>
</dbReference>
<dbReference type="SUPFAM" id="SSF118215">
    <property type="entry name" value="Proton glutamate symport protein"/>
    <property type="match status" value="1"/>
</dbReference>
<dbReference type="PROSITE" id="PS00713">
    <property type="entry name" value="NA_DICARBOXYL_SYMP_1"/>
    <property type="match status" value="1"/>
</dbReference>